<protein>
    <recommendedName>
        <fullName evidence="1">Uracil-DNA glycosylase</fullName>
        <shortName evidence="1">UDG</shortName>
        <ecNumber evidence="1">3.2.2.27</ecNumber>
    </recommendedName>
</protein>
<evidence type="ECO:0000255" key="1">
    <source>
        <dbReference type="HAMAP-Rule" id="MF_00148"/>
    </source>
</evidence>
<reference key="1">
    <citation type="journal article" date="2004" name="Nucleic Acids Res.">
        <title>Thermoadaptation trait revealed by the genome sequence of thermophilic Geobacillus kaustophilus.</title>
        <authorList>
            <person name="Takami H."/>
            <person name="Takaki Y."/>
            <person name="Chee G.-J."/>
            <person name="Nishi S."/>
            <person name="Shimamura S."/>
            <person name="Suzuki H."/>
            <person name="Matsui S."/>
            <person name="Uchiyama I."/>
        </authorList>
    </citation>
    <scope>NUCLEOTIDE SEQUENCE [LARGE SCALE GENOMIC DNA]</scope>
    <source>
        <strain>HTA426</strain>
    </source>
</reference>
<feature type="chain" id="PRO_0000176098" description="Uracil-DNA glycosylase">
    <location>
        <begin position="1"/>
        <end position="229"/>
    </location>
</feature>
<feature type="active site" description="Proton acceptor" evidence="1">
    <location>
        <position position="64"/>
    </location>
</feature>
<keyword id="KW-0963">Cytoplasm</keyword>
<keyword id="KW-0227">DNA damage</keyword>
<keyword id="KW-0234">DNA repair</keyword>
<keyword id="KW-0378">Hydrolase</keyword>
<keyword id="KW-1185">Reference proteome</keyword>
<sequence>MPILKNDWAPLLEEEFQKPYYLKLREFLKEEYRTRTIYPDMHDIFNALHYTPYANVKVVLLGQDPYHGPGQAHGLSFSVKPGVPVPPSLANIFKELHDDLGCYIPDNGYLVKWAEQGVLLLNTVLTVRRGQANSHRGKGWEYFTDRVIELVNEKDDPVVFLLWGRNAQEKKERITNPRHLIIEAPHPSPFSAARGFFGHRPFSRTNAFLTKHGREPIDWQIENIGARAE</sequence>
<accession>Q5KUD0</accession>
<dbReference type="EC" id="3.2.2.27" evidence="1"/>
<dbReference type="EMBL" id="BA000043">
    <property type="protein sequence ID" value="BAD77706.1"/>
    <property type="molecule type" value="Genomic_DNA"/>
</dbReference>
<dbReference type="RefSeq" id="WP_011232888.1">
    <property type="nucleotide sequence ID" value="NC_006510.1"/>
</dbReference>
<dbReference type="SMR" id="Q5KUD0"/>
<dbReference type="STRING" id="235909.GK3421"/>
<dbReference type="KEGG" id="gka:GK3421"/>
<dbReference type="eggNOG" id="COG0692">
    <property type="taxonomic scope" value="Bacteria"/>
</dbReference>
<dbReference type="HOGENOM" id="CLU_032162_3_0_9"/>
<dbReference type="Proteomes" id="UP000001172">
    <property type="component" value="Chromosome"/>
</dbReference>
<dbReference type="GO" id="GO:0005737">
    <property type="term" value="C:cytoplasm"/>
    <property type="evidence" value="ECO:0007669"/>
    <property type="project" value="UniProtKB-SubCell"/>
</dbReference>
<dbReference type="GO" id="GO:0004844">
    <property type="term" value="F:uracil DNA N-glycosylase activity"/>
    <property type="evidence" value="ECO:0007669"/>
    <property type="project" value="UniProtKB-UniRule"/>
</dbReference>
<dbReference type="GO" id="GO:0097510">
    <property type="term" value="P:base-excision repair, AP site formation via deaminated base removal"/>
    <property type="evidence" value="ECO:0007669"/>
    <property type="project" value="TreeGrafter"/>
</dbReference>
<dbReference type="CDD" id="cd10027">
    <property type="entry name" value="UDG-F1-like"/>
    <property type="match status" value="1"/>
</dbReference>
<dbReference type="FunFam" id="3.40.470.10:FF:000001">
    <property type="entry name" value="Uracil-DNA glycosylase"/>
    <property type="match status" value="1"/>
</dbReference>
<dbReference type="Gene3D" id="3.40.470.10">
    <property type="entry name" value="Uracil-DNA glycosylase-like domain"/>
    <property type="match status" value="1"/>
</dbReference>
<dbReference type="HAMAP" id="MF_00148">
    <property type="entry name" value="UDG"/>
    <property type="match status" value="1"/>
</dbReference>
<dbReference type="InterPro" id="IPR002043">
    <property type="entry name" value="UDG_fam1"/>
</dbReference>
<dbReference type="InterPro" id="IPR018085">
    <property type="entry name" value="Ura-DNA_Glyclase_AS"/>
</dbReference>
<dbReference type="InterPro" id="IPR005122">
    <property type="entry name" value="Uracil-DNA_glycosylase-like"/>
</dbReference>
<dbReference type="InterPro" id="IPR036895">
    <property type="entry name" value="Uracil-DNA_glycosylase-like_sf"/>
</dbReference>
<dbReference type="NCBIfam" id="NF003588">
    <property type="entry name" value="PRK05254.1-1"/>
    <property type="match status" value="1"/>
</dbReference>
<dbReference type="NCBIfam" id="NF003589">
    <property type="entry name" value="PRK05254.1-2"/>
    <property type="match status" value="1"/>
</dbReference>
<dbReference type="NCBIfam" id="NF003591">
    <property type="entry name" value="PRK05254.1-4"/>
    <property type="match status" value="1"/>
</dbReference>
<dbReference type="NCBIfam" id="NF003592">
    <property type="entry name" value="PRK05254.1-5"/>
    <property type="match status" value="1"/>
</dbReference>
<dbReference type="NCBIfam" id="TIGR00628">
    <property type="entry name" value="ung"/>
    <property type="match status" value="1"/>
</dbReference>
<dbReference type="PANTHER" id="PTHR11264">
    <property type="entry name" value="URACIL-DNA GLYCOSYLASE"/>
    <property type="match status" value="1"/>
</dbReference>
<dbReference type="PANTHER" id="PTHR11264:SF0">
    <property type="entry name" value="URACIL-DNA GLYCOSYLASE"/>
    <property type="match status" value="1"/>
</dbReference>
<dbReference type="Pfam" id="PF03167">
    <property type="entry name" value="UDG"/>
    <property type="match status" value="1"/>
</dbReference>
<dbReference type="SMART" id="SM00986">
    <property type="entry name" value="UDG"/>
    <property type="match status" value="1"/>
</dbReference>
<dbReference type="SMART" id="SM00987">
    <property type="entry name" value="UreE_C"/>
    <property type="match status" value="1"/>
</dbReference>
<dbReference type="SUPFAM" id="SSF52141">
    <property type="entry name" value="Uracil-DNA glycosylase-like"/>
    <property type="match status" value="1"/>
</dbReference>
<dbReference type="PROSITE" id="PS00130">
    <property type="entry name" value="U_DNA_GLYCOSYLASE"/>
    <property type="match status" value="1"/>
</dbReference>
<proteinExistence type="inferred from homology"/>
<organism>
    <name type="scientific">Geobacillus kaustophilus (strain HTA426)</name>
    <dbReference type="NCBI Taxonomy" id="235909"/>
    <lineage>
        <taxon>Bacteria</taxon>
        <taxon>Bacillati</taxon>
        <taxon>Bacillota</taxon>
        <taxon>Bacilli</taxon>
        <taxon>Bacillales</taxon>
        <taxon>Anoxybacillaceae</taxon>
        <taxon>Geobacillus</taxon>
        <taxon>Geobacillus thermoleovorans group</taxon>
    </lineage>
</organism>
<comment type="function">
    <text evidence="1">Excises uracil residues from the DNA which can arise as a result of misincorporation of dUMP residues by DNA polymerase or due to deamination of cytosine.</text>
</comment>
<comment type="catalytic activity">
    <reaction evidence="1">
        <text>Hydrolyzes single-stranded DNA or mismatched double-stranded DNA and polynucleotides, releasing free uracil.</text>
        <dbReference type="EC" id="3.2.2.27"/>
    </reaction>
</comment>
<comment type="subcellular location">
    <subcellularLocation>
        <location evidence="1">Cytoplasm</location>
    </subcellularLocation>
</comment>
<comment type="similarity">
    <text evidence="1">Belongs to the uracil-DNA glycosylase (UDG) superfamily. UNG family.</text>
</comment>
<name>UNG_GEOKA</name>
<gene>
    <name evidence="1" type="primary">ung</name>
    <name type="ordered locus">GK3421</name>
</gene>